<organism>
    <name type="scientific">Chlorobaculum tepidum (strain ATCC 49652 / DSM 12025 / NBRC 103806 / TLS)</name>
    <name type="common">Chlorobium tepidum</name>
    <dbReference type="NCBI Taxonomy" id="194439"/>
    <lineage>
        <taxon>Bacteria</taxon>
        <taxon>Pseudomonadati</taxon>
        <taxon>Chlorobiota</taxon>
        <taxon>Chlorobiia</taxon>
        <taxon>Chlorobiales</taxon>
        <taxon>Chlorobiaceae</taxon>
        <taxon>Chlorobaculum</taxon>
    </lineage>
</organism>
<evidence type="ECO:0000255" key="1">
    <source>
        <dbReference type="HAMAP-Rule" id="MF_00244"/>
    </source>
</evidence>
<protein>
    <recommendedName>
        <fullName evidence="1">Probable nicotinate-nucleotide adenylyltransferase</fullName>
        <ecNumber evidence="1">2.7.7.18</ecNumber>
    </recommendedName>
    <alternativeName>
        <fullName evidence="1">Deamido-NAD(+) diphosphorylase</fullName>
    </alternativeName>
    <alternativeName>
        <fullName evidence="1">Deamido-NAD(+) pyrophosphorylase</fullName>
    </alternativeName>
    <alternativeName>
        <fullName evidence="1">Nicotinate mononucleotide adenylyltransferase</fullName>
        <shortName evidence="1">NaMN adenylyltransferase</shortName>
    </alternativeName>
</protein>
<dbReference type="EC" id="2.7.7.18" evidence="1"/>
<dbReference type="EMBL" id="AE006470">
    <property type="protein sequence ID" value="AAM71264.1"/>
    <property type="molecule type" value="Genomic_DNA"/>
</dbReference>
<dbReference type="RefSeq" id="NP_660922.1">
    <property type="nucleotide sequence ID" value="NC_002932.3"/>
</dbReference>
<dbReference type="RefSeq" id="WP_010931710.1">
    <property type="nucleotide sequence ID" value="NC_002932.3"/>
</dbReference>
<dbReference type="SMR" id="Q8KGF2"/>
<dbReference type="STRING" id="194439.CT0016"/>
<dbReference type="EnsemblBacteria" id="AAM71264">
    <property type="protein sequence ID" value="AAM71264"/>
    <property type="gene ID" value="CT0016"/>
</dbReference>
<dbReference type="KEGG" id="cte:CT0016"/>
<dbReference type="PATRIC" id="fig|194439.7.peg.15"/>
<dbReference type="eggNOG" id="COG1057">
    <property type="taxonomic scope" value="Bacteria"/>
</dbReference>
<dbReference type="HOGENOM" id="CLU_069765_3_2_10"/>
<dbReference type="OrthoDB" id="5295945at2"/>
<dbReference type="UniPathway" id="UPA00253">
    <property type="reaction ID" value="UER00332"/>
</dbReference>
<dbReference type="Proteomes" id="UP000001007">
    <property type="component" value="Chromosome"/>
</dbReference>
<dbReference type="GO" id="GO:0005524">
    <property type="term" value="F:ATP binding"/>
    <property type="evidence" value="ECO:0007669"/>
    <property type="project" value="UniProtKB-KW"/>
</dbReference>
<dbReference type="GO" id="GO:0004515">
    <property type="term" value="F:nicotinate-nucleotide adenylyltransferase activity"/>
    <property type="evidence" value="ECO:0007669"/>
    <property type="project" value="UniProtKB-UniRule"/>
</dbReference>
<dbReference type="GO" id="GO:0009435">
    <property type="term" value="P:NAD biosynthetic process"/>
    <property type="evidence" value="ECO:0007669"/>
    <property type="project" value="UniProtKB-UniRule"/>
</dbReference>
<dbReference type="CDD" id="cd02165">
    <property type="entry name" value="NMNAT"/>
    <property type="match status" value="1"/>
</dbReference>
<dbReference type="Gene3D" id="3.40.50.620">
    <property type="entry name" value="HUPs"/>
    <property type="match status" value="1"/>
</dbReference>
<dbReference type="HAMAP" id="MF_00244">
    <property type="entry name" value="NaMN_adenylyltr"/>
    <property type="match status" value="1"/>
</dbReference>
<dbReference type="InterPro" id="IPR004821">
    <property type="entry name" value="Cyt_trans-like"/>
</dbReference>
<dbReference type="InterPro" id="IPR005248">
    <property type="entry name" value="NadD/NMNAT"/>
</dbReference>
<dbReference type="InterPro" id="IPR014729">
    <property type="entry name" value="Rossmann-like_a/b/a_fold"/>
</dbReference>
<dbReference type="NCBIfam" id="TIGR00125">
    <property type="entry name" value="cyt_tran_rel"/>
    <property type="match status" value="1"/>
</dbReference>
<dbReference type="NCBIfam" id="TIGR00482">
    <property type="entry name" value="nicotinate (nicotinamide) nucleotide adenylyltransferase"/>
    <property type="match status" value="1"/>
</dbReference>
<dbReference type="PANTHER" id="PTHR39321">
    <property type="entry name" value="NICOTINATE-NUCLEOTIDE ADENYLYLTRANSFERASE-RELATED"/>
    <property type="match status" value="1"/>
</dbReference>
<dbReference type="PANTHER" id="PTHR39321:SF3">
    <property type="entry name" value="PHOSPHOPANTETHEINE ADENYLYLTRANSFERASE"/>
    <property type="match status" value="1"/>
</dbReference>
<dbReference type="Pfam" id="PF01467">
    <property type="entry name" value="CTP_transf_like"/>
    <property type="match status" value="1"/>
</dbReference>
<dbReference type="SUPFAM" id="SSF52374">
    <property type="entry name" value="Nucleotidylyl transferase"/>
    <property type="match status" value="1"/>
</dbReference>
<feature type="chain" id="PRO_1000058991" description="Probable nicotinate-nucleotide adenylyltransferase">
    <location>
        <begin position="1"/>
        <end position="195"/>
    </location>
</feature>
<keyword id="KW-0067">ATP-binding</keyword>
<keyword id="KW-0520">NAD</keyword>
<keyword id="KW-0547">Nucleotide-binding</keyword>
<keyword id="KW-0548">Nucleotidyltransferase</keyword>
<keyword id="KW-0662">Pyridine nucleotide biosynthesis</keyword>
<keyword id="KW-1185">Reference proteome</keyword>
<keyword id="KW-0808">Transferase</keyword>
<sequence>MRTAVFGGSFDPPHNGHLALSLFARELAGLDRLIVSVSKNPFKAAADASDDDRSAMARLLVAEINVAGVFAEISGWELQQSGPSYTIDLLRHVEERCPGDELVLLVGEDSYLQMPQWKFASEILKHCTIAVFGRSDIDAADAPPSDPLLPAIHYDFDMPVSATKIRRLAAAGQPIGQFVPSSIAQYIAEHKLYSA</sequence>
<proteinExistence type="inferred from homology"/>
<gene>
    <name evidence="1" type="primary">nadD</name>
    <name type="ordered locus">CT0016</name>
</gene>
<accession>Q8KGF2</accession>
<name>NADD_CHLTE</name>
<comment type="function">
    <text evidence="1">Catalyzes the reversible adenylation of nicotinate mononucleotide (NaMN) to nicotinic acid adenine dinucleotide (NaAD).</text>
</comment>
<comment type="catalytic activity">
    <reaction evidence="1">
        <text>nicotinate beta-D-ribonucleotide + ATP + H(+) = deamido-NAD(+) + diphosphate</text>
        <dbReference type="Rhea" id="RHEA:22860"/>
        <dbReference type="ChEBI" id="CHEBI:15378"/>
        <dbReference type="ChEBI" id="CHEBI:30616"/>
        <dbReference type="ChEBI" id="CHEBI:33019"/>
        <dbReference type="ChEBI" id="CHEBI:57502"/>
        <dbReference type="ChEBI" id="CHEBI:58437"/>
        <dbReference type="EC" id="2.7.7.18"/>
    </reaction>
</comment>
<comment type="pathway">
    <text evidence="1">Cofactor biosynthesis; NAD(+) biosynthesis; deamido-NAD(+) from nicotinate D-ribonucleotide: step 1/1.</text>
</comment>
<comment type="similarity">
    <text evidence="1">Belongs to the NadD family.</text>
</comment>
<reference key="1">
    <citation type="journal article" date="2002" name="Proc. Natl. Acad. Sci. U.S.A.">
        <title>The complete genome sequence of Chlorobium tepidum TLS, a photosynthetic, anaerobic, green-sulfur bacterium.</title>
        <authorList>
            <person name="Eisen J.A."/>
            <person name="Nelson K.E."/>
            <person name="Paulsen I.T."/>
            <person name="Heidelberg J.F."/>
            <person name="Wu M."/>
            <person name="Dodson R.J."/>
            <person name="DeBoy R.T."/>
            <person name="Gwinn M.L."/>
            <person name="Nelson W.C."/>
            <person name="Haft D.H."/>
            <person name="Hickey E.K."/>
            <person name="Peterson J.D."/>
            <person name="Durkin A.S."/>
            <person name="Kolonay J.F."/>
            <person name="Yang F."/>
            <person name="Holt I.E."/>
            <person name="Umayam L.A."/>
            <person name="Mason T.M."/>
            <person name="Brenner M."/>
            <person name="Shea T.P."/>
            <person name="Parksey D.S."/>
            <person name="Nierman W.C."/>
            <person name="Feldblyum T.V."/>
            <person name="Hansen C.L."/>
            <person name="Craven M.B."/>
            <person name="Radune D."/>
            <person name="Vamathevan J.J."/>
            <person name="Khouri H.M."/>
            <person name="White O."/>
            <person name="Gruber T.M."/>
            <person name="Ketchum K.A."/>
            <person name="Venter J.C."/>
            <person name="Tettelin H."/>
            <person name="Bryant D.A."/>
            <person name="Fraser C.M."/>
        </authorList>
    </citation>
    <scope>NUCLEOTIDE SEQUENCE [LARGE SCALE GENOMIC DNA]</scope>
    <source>
        <strain>ATCC 49652 / DSM 12025 / NBRC 103806 / TLS</strain>
    </source>
</reference>